<sequence>MAVKIRLTRMGKIRAPYYRIVVADARTKRDGRAIEEIGQYDPKQEPSLIRVNSERVAYWLSVGAQPTEPVKALLKVTGDWQRFTGEPAPPPMKTAPPKPDKKALFEAAAKEAAGEPRAEATTSRKRSGKHDKGAETTPAAEAAPDAAASADEPAGGASTAAESQDATTDATPSA</sequence>
<comment type="similarity">
    <text evidence="1">Belongs to the bacterial ribosomal protein bS16 family.</text>
</comment>
<evidence type="ECO:0000255" key="1">
    <source>
        <dbReference type="HAMAP-Rule" id="MF_00385"/>
    </source>
</evidence>
<evidence type="ECO:0000256" key="2">
    <source>
        <dbReference type="SAM" id="MobiDB-lite"/>
    </source>
</evidence>
<evidence type="ECO:0000305" key="3"/>
<organism>
    <name type="scientific">Acidothermus cellulolyticus (strain ATCC 43068 / DSM 8971 / 11B)</name>
    <dbReference type="NCBI Taxonomy" id="351607"/>
    <lineage>
        <taxon>Bacteria</taxon>
        <taxon>Bacillati</taxon>
        <taxon>Actinomycetota</taxon>
        <taxon>Actinomycetes</taxon>
        <taxon>Acidothermales</taxon>
        <taxon>Acidothermaceae</taxon>
        <taxon>Acidothermus</taxon>
    </lineage>
</organism>
<name>RS16_ACIC1</name>
<feature type="chain" id="PRO_1000049203" description="Small ribosomal subunit protein bS16">
    <location>
        <begin position="1"/>
        <end position="174"/>
    </location>
</feature>
<feature type="region of interest" description="Disordered" evidence="2">
    <location>
        <begin position="81"/>
        <end position="174"/>
    </location>
</feature>
<feature type="compositionally biased region" description="Pro residues" evidence="2">
    <location>
        <begin position="87"/>
        <end position="97"/>
    </location>
</feature>
<feature type="compositionally biased region" description="Basic and acidic residues" evidence="2">
    <location>
        <begin position="98"/>
        <end position="118"/>
    </location>
</feature>
<feature type="compositionally biased region" description="Low complexity" evidence="2">
    <location>
        <begin position="135"/>
        <end position="158"/>
    </location>
</feature>
<feature type="compositionally biased region" description="Polar residues" evidence="2">
    <location>
        <begin position="160"/>
        <end position="174"/>
    </location>
</feature>
<accession>A0LV73</accession>
<protein>
    <recommendedName>
        <fullName evidence="1">Small ribosomal subunit protein bS16</fullName>
    </recommendedName>
    <alternativeName>
        <fullName evidence="3">30S ribosomal protein S16</fullName>
    </alternativeName>
</protein>
<reference key="1">
    <citation type="journal article" date="2009" name="Genome Res.">
        <title>Complete genome of the cellulolytic thermophile Acidothermus cellulolyticus 11B provides insights into its ecophysiological and evolutionary adaptations.</title>
        <authorList>
            <person name="Barabote R.D."/>
            <person name="Xie G."/>
            <person name="Leu D.H."/>
            <person name="Normand P."/>
            <person name="Necsulea A."/>
            <person name="Daubin V."/>
            <person name="Medigue C."/>
            <person name="Adney W.S."/>
            <person name="Xu X.C."/>
            <person name="Lapidus A."/>
            <person name="Parales R.E."/>
            <person name="Detter C."/>
            <person name="Pujic P."/>
            <person name="Bruce D."/>
            <person name="Lavire C."/>
            <person name="Challacombe J.F."/>
            <person name="Brettin T.S."/>
            <person name="Berry A.M."/>
        </authorList>
    </citation>
    <scope>NUCLEOTIDE SEQUENCE [LARGE SCALE GENOMIC DNA]</scope>
    <source>
        <strain>ATCC 43068 / DSM 8971 / 11B</strain>
    </source>
</reference>
<dbReference type="EMBL" id="CP000481">
    <property type="protein sequence ID" value="ABK53333.1"/>
    <property type="molecule type" value="Genomic_DNA"/>
</dbReference>
<dbReference type="RefSeq" id="WP_011720396.1">
    <property type="nucleotide sequence ID" value="NC_008578.1"/>
</dbReference>
<dbReference type="SMR" id="A0LV73"/>
<dbReference type="FunCoup" id="A0LV73">
    <property type="interactions" value="55"/>
</dbReference>
<dbReference type="STRING" id="351607.Acel_1561"/>
<dbReference type="KEGG" id="ace:Acel_1561"/>
<dbReference type="eggNOG" id="COG0228">
    <property type="taxonomic scope" value="Bacteria"/>
</dbReference>
<dbReference type="HOGENOM" id="CLU_100590_1_1_11"/>
<dbReference type="InParanoid" id="A0LV73"/>
<dbReference type="OrthoDB" id="9807878at2"/>
<dbReference type="Proteomes" id="UP000008221">
    <property type="component" value="Chromosome"/>
</dbReference>
<dbReference type="GO" id="GO:0005737">
    <property type="term" value="C:cytoplasm"/>
    <property type="evidence" value="ECO:0007669"/>
    <property type="project" value="UniProtKB-ARBA"/>
</dbReference>
<dbReference type="GO" id="GO:0015935">
    <property type="term" value="C:small ribosomal subunit"/>
    <property type="evidence" value="ECO:0007669"/>
    <property type="project" value="TreeGrafter"/>
</dbReference>
<dbReference type="GO" id="GO:0003735">
    <property type="term" value="F:structural constituent of ribosome"/>
    <property type="evidence" value="ECO:0007669"/>
    <property type="project" value="InterPro"/>
</dbReference>
<dbReference type="GO" id="GO:0006412">
    <property type="term" value="P:translation"/>
    <property type="evidence" value="ECO:0007669"/>
    <property type="project" value="UniProtKB-UniRule"/>
</dbReference>
<dbReference type="Gene3D" id="3.30.1320.10">
    <property type="match status" value="1"/>
</dbReference>
<dbReference type="HAMAP" id="MF_00385">
    <property type="entry name" value="Ribosomal_bS16"/>
    <property type="match status" value="1"/>
</dbReference>
<dbReference type="InterPro" id="IPR000307">
    <property type="entry name" value="Ribosomal_bS16"/>
</dbReference>
<dbReference type="InterPro" id="IPR020592">
    <property type="entry name" value="Ribosomal_bS16_CS"/>
</dbReference>
<dbReference type="InterPro" id="IPR023803">
    <property type="entry name" value="Ribosomal_bS16_dom_sf"/>
</dbReference>
<dbReference type="NCBIfam" id="NF011093">
    <property type="entry name" value="PRK14520.1"/>
    <property type="match status" value="1"/>
</dbReference>
<dbReference type="NCBIfam" id="TIGR00002">
    <property type="entry name" value="S16"/>
    <property type="match status" value="1"/>
</dbReference>
<dbReference type="PANTHER" id="PTHR12919">
    <property type="entry name" value="30S RIBOSOMAL PROTEIN S16"/>
    <property type="match status" value="1"/>
</dbReference>
<dbReference type="PANTHER" id="PTHR12919:SF20">
    <property type="entry name" value="SMALL RIBOSOMAL SUBUNIT PROTEIN BS16M"/>
    <property type="match status" value="1"/>
</dbReference>
<dbReference type="Pfam" id="PF00886">
    <property type="entry name" value="Ribosomal_S16"/>
    <property type="match status" value="1"/>
</dbReference>
<dbReference type="SUPFAM" id="SSF54565">
    <property type="entry name" value="Ribosomal protein S16"/>
    <property type="match status" value="1"/>
</dbReference>
<dbReference type="PROSITE" id="PS00732">
    <property type="entry name" value="RIBOSOMAL_S16"/>
    <property type="match status" value="1"/>
</dbReference>
<gene>
    <name evidence="1" type="primary">rpsP</name>
    <name type="ordered locus">Acel_1561</name>
</gene>
<keyword id="KW-1185">Reference proteome</keyword>
<keyword id="KW-0687">Ribonucleoprotein</keyword>
<keyword id="KW-0689">Ribosomal protein</keyword>
<proteinExistence type="inferred from homology"/>